<feature type="chain" id="PRO_1000205824" description="Large ribosomal subunit protein bL34">
    <location>
        <begin position="1"/>
        <end position="46"/>
    </location>
</feature>
<keyword id="KW-0687">Ribonucleoprotein</keyword>
<keyword id="KW-0689">Ribosomal protein</keyword>
<comment type="similarity">
    <text evidence="1">Belongs to the bacterial ribosomal protein bL34 family.</text>
</comment>
<proteinExistence type="inferred from homology"/>
<gene>
    <name evidence="1" type="primary">rpmH</name>
    <name type="ordered locus">BWG_3393</name>
</gene>
<sequence>MKRTFQPSVLKRNRSHGFRARMATKNGRQVLARRRAKGRARLTVSK</sequence>
<reference key="1">
    <citation type="journal article" date="2009" name="J. Bacteriol.">
        <title>Genomic sequencing reveals regulatory mutations and recombinational events in the widely used MC4100 lineage of Escherichia coli K-12.</title>
        <authorList>
            <person name="Ferenci T."/>
            <person name="Zhou Z."/>
            <person name="Betteridge T."/>
            <person name="Ren Y."/>
            <person name="Liu Y."/>
            <person name="Feng L."/>
            <person name="Reeves P.R."/>
            <person name="Wang L."/>
        </authorList>
    </citation>
    <scope>NUCLEOTIDE SEQUENCE [LARGE SCALE GENOMIC DNA]</scope>
    <source>
        <strain>K12 / MC4100 / BW2952</strain>
    </source>
</reference>
<dbReference type="EMBL" id="CP001396">
    <property type="protein sequence ID" value="ACR61871.1"/>
    <property type="molecule type" value="Genomic_DNA"/>
</dbReference>
<dbReference type="RefSeq" id="WP_000831330.1">
    <property type="nucleotide sequence ID" value="NC_012759.1"/>
</dbReference>
<dbReference type="SMR" id="C4ZYY0"/>
<dbReference type="GeneID" id="98190980"/>
<dbReference type="KEGG" id="ebw:BWG_3393"/>
<dbReference type="HOGENOM" id="CLU_129938_2_1_6"/>
<dbReference type="GO" id="GO:1990904">
    <property type="term" value="C:ribonucleoprotein complex"/>
    <property type="evidence" value="ECO:0007669"/>
    <property type="project" value="UniProtKB-KW"/>
</dbReference>
<dbReference type="GO" id="GO:0005840">
    <property type="term" value="C:ribosome"/>
    <property type="evidence" value="ECO:0007669"/>
    <property type="project" value="UniProtKB-KW"/>
</dbReference>
<dbReference type="GO" id="GO:0003735">
    <property type="term" value="F:structural constituent of ribosome"/>
    <property type="evidence" value="ECO:0007669"/>
    <property type="project" value="InterPro"/>
</dbReference>
<dbReference type="GO" id="GO:0006412">
    <property type="term" value="P:translation"/>
    <property type="evidence" value="ECO:0007669"/>
    <property type="project" value="UniProtKB-UniRule"/>
</dbReference>
<dbReference type="FunFam" id="1.10.287.3980:FF:000001">
    <property type="entry name" value="Mitochondrial ribosomal protein L34"/>
    <property type="match status" value="1"/>
</dbReference>
<dbReference type="Gene3D" id="1.10.287.3980">
    <property type="match status" value="1"/>
</dbReference>
<dbReference type="HAMAP" id="MF_00391">
    <property type="entry name" value="Ribosomal_bL34"/>
    <property type="match status" value="1"/>
</dbReference>
<dbReference type="InterPro" id="IPR000271">
    <property type="entry name" value="Ribosomal_bL34"/>
</dbReference>
<dbReference type="InterPro" id="IPR020939">
    <property type="entry name" value="Ribosomal_bL34_CS"/>
</dbReference>
<dbReference type="NCBIfam" id="TIGR01030">
    <property type="entry name" value="rpmH_bact"/>
    <property type="match status" value="1"/>
</dbReference>
<dbReference type="PANTHER" id="PTHR14503:SF4">
    <property type="entry name" value="LARGE RIBOSOMAL SUBUNIT PROTEIN BL34M"/>
    <property type="match status" value="1"/>
</dbReference>
<dbReference type="PANTHER" id="PTHR14503">
    <property type="entry name" value="MITOCHONDRIAL RIBOSOMAL PROTEIN 34 FAMILY MEMBER"/>
    <property type="match status" value="1"/>
</dbReference>
<dbReference type="Pfam" id="PF00468">
    <property type="entry name" value="Ribosomal_L34"/>
    <property type="match status" value="1"/>
</dbReference>
<dbReference type="PROSITE" id="PS00784">
    <property type="entry name" value="RIBOSOMAL_L34"/>
    <property type="match status" value="1"/>
</dbReference>
<organism>
    <name type="scientific">Escherichia coli (strain K12 / MC4100 / BW2952)</name>
    <dbReference type="NCBI Taxonomy" id="595496"/>
    <lineage>
        <taxon>Bacteria</taxon>
        <taxon>Pseudomonadati</taxon>
        <taxon>Pseudomonadota</taxon>
        <taxon>Gammaproteobacteria</taxon>
        <taxon>Enterobacterales</taxon>
        <taxon>Enterobacteriaceae</taxon>
        <taxon>Escherichia</taxon>
    </lineage>
</organism>
<evidence type="ECO:0000255" key="1">
    <source>
        <dbReference type="HAMAP-Rule" id="MF_00391"/>
    </source>
</evidence>
<evidence type="ECO:0000305" key="2"/>
<name>RL34_ECOBW</name>
<protein>
    <recommendedName>
        <fullName evidence="1">Large ribosomal subunit protein bL34</fullName>
    </recommendedName>
    <alternativeName>
        <fullName evidence="2">50S ribosomal protein L34</fullName>
    </alternativeName>
</protein>
<accession>C4ZYY0</accession>